<comment type="function">
    <text evidence="1">Required for insertion of 4Fe-4S clusters for at least IspG.</text>
</comment>
<comment type="cofactor">
    <cofactor evidence="1">
        <name>iron-sulfur cluster</name>
        <dbReference type="ChEBI" id="CHEBI:30408"/>
    </cofactor>
    <text evidence="1">Binds 1 iron-sulfur cluster per subunit.</text>
</comment>
<comment type="subunit">
    <text evidence="1">Homodimer.</text>
</comment>
<comment type="similarity">
    <text evidence="1">Belongs to the HesB/IscA family.</text>
</comment>
<protein>
    <recommendedName>
        <fullName evidence="1">Iron-sulfur cluster insertion protein ErpA</fullName>
    </recommendedName>
</protein>
<feature type="chain" id="PRO_0000311501" description="Iron-sulfur cluster insertion protein ErpA">
    <location>
        <begin position="1"/>
        <end position="113"/>
    </location>
</feature>
<feature type="binding site" evidence="1">
    <location>
        <position position="41"/>
    </location>
    <ligand>
        <name>iron-sulfur cluster</name>
        <dbReference type="ChEBI" id="CHEBI:30408"/>
    </ligand>
</feature>
<feature type="binding site" evidence="1">
    <location>
        <position position="105"/>
    </location>
    <ligand>
        <name>iron-sulfur cluster</name>
        <dbReference type="ChEBI" id="CHEBI:30408"/>
    </ligand>
</feature>
<feature type="binding site" evidence="1">
    <location>
        <position position="107"/>
    </location>
    <ligand>
        <name>iron-sulfur cluster</name>
        <dbReference type="ChEBI" id="CHEBI:30408"/>
    </ligand>
</feature>
<keyword id="KW-0408">Iron</keyword>
<keyword id="KW-0411">Iron-sulfur</keyword>
<keyword id="KW-0479">Metal-binding</keyword>
<name>ERPA_MANSM</name>
<evidence type="ECO:0000255" key="1">
    <source>
        <dbReference type="HAMAP-Rule" id="MF_01380"/>
    </source>
</evidence>
<accession>Q65SZ6</accession>
<gene>
    <name evidence="1" type="primary">erpA</name>
    <name type="ordered locus">MS1307</name>
</gene>
<organism>
    <name type="scientific">Mannheimia succiniciproducens (strain KCTC 0769BP / MBEL55E)</name>
    <dbReference type="NCBI Taxonomy" id="221988"/>
    <lineage>
        <taxon>Bacteria</taxon>
        <taxon>Pseudomonadati</taxon>
        <taxon>Pseudomonadota</taxon>
        <taxon>Gammaproteobacteria</taxon>
        <taxon>Pasteurellales</taxon>
        <taxon>Pasteurellaceae</taxon>
        <taxon>Basfia</taxon>
    </lineage>
</organism>
<dbReference type="EMBL" id="AE016827">
    <property type="protein sequence ID" value="AAU37914.1"/>
    <property type="molecule type" value="Genomic_DNA"/>
</dbReference>
<dbReference type="RefSeq" id="WP_011200481.1">
    <property type="nucleotide sequence ID" value="NC_006300.1"/>
</dbReference>
<dbReference type="SMR" id="Q65SZ6"/>
<dbReference type="STRING" id="221988.MS1307"/>
<dbReference type="KEGG" id="msu:MS1307"/>
<dbReference type="eggNOG" id="COG0316">
    <property type="taxonomic scope" value="Bacteria"/>
</dbReference>
<dbReference type="HOGENOM" id="CLU_069054_5_3_6"/>
<dbReference type="OrthoDB" id="9801228at2"/>
<dbReference type="Proteomes" id="UP000000607">
    <property type="component" value="Chromosome"/>
</dbReference>
<dbReference type="GO" id="GO:0005829">
    <property type="term" value="C:cytosol"/>
    <property type="evidence" value="ECO:0007669"/>
    <property type="project" value="TreeGrafter"/>
</dbReference>
<dbReference type="GO" id="GO:0051537">
    <property type="term" value="F:2 iron, 2 sulfur cluster binding"/>
    <property type="evidence" value="ECO:0007669"/>
    <property type="project" value="UniProtKB-ARBA"/>
</dbReference>
<dbReference type="GO" id="GO:0051539">
    <property type="term" value="F:4 iron, 4 sulfur cluster binding"/>
    <property type="evidence" value="ECO:0007669"/>
    <property type="project" value="TreeGrafter"/>
</dbReference>
<dbReference type="GO" id="GO:0005506">
    <property type="term" value="F:iron ion binding"/>
    <property type="evidence" value="ECO:0007669"/>
    <property type="project" value="UniProtKB-UniRule"/>
</dbReference>
<dbReference type="GO" id="GO:0016226">
    <property type="term" value="P:iron-sulfur cluster assembly"/>
    <property type="evidence" value="ECO:0007669"/>
    <property type="project" value="UniProtKB-UniRule"/>
</dbReference>
<dbReference type="FunFam" id="2.60.300.12:FF:000002">
    <property type="entry name" value="Iron-sulfur cluster insertion protein ErpA"/>
    <property type="match status" value="1"/>
</dbReference>
<dbReference type="Gene3D" id="2.60.300.12">
    <property type="entry name" value="HesB-like domain"/>
    <property type="match status" value="1"/>
</dbReference>
<dbReference type="HAMAP" id="MF_01380">
    <property type="entry name" value="Fe_S_insert_ErpA"/>
    <property type="match status" value="1"/>
</dbReference>
<dbReference type="InterPro" id="IPR000361">
    <property type="entry name" value="FeS_biogenesis"/>
</dbReference>
<dbReference type="InterPro" id="IPR016092">
    <property type="entry name" value="FeS_cluster_insertion"/>
</dbReference>
<dbReference type="InterPro" id="IPR017870">
    <property type="entry name" value="FeS_cluster_insertion_CS"/>
</dbReference>
<dbReference type="InterPro" id="IPR023063">
    <property type="entry name" value="FeS_cluster_insertion_RrpA"/>
</dbReference>
<dbReference type="InterPro" id="IPR035903">
    <property type="entry name" value="HesB-like_dom_sf"/>
</dbReference>
<dbReference type="NCBIfam" id="TIGR00049">
    <property type="entry name" value="iron-sulfur cluster assembly accessory protein"/>
    <property type="match status" value="1"/>
</dbReference>
<dbReference type="NCBIfam" id="NF010147">
    <property type="entry name" value="PRK13623.1"/>
    <property type="match status" value="1"/>
</dbReference>
<dbReference type="PANTHER" id="PTHR43011">
    <property type="entry name" value="IRON-SULFUR CLUSTER ASSEMBLY 2 HOMOLOG, MITOCHONDRIAL"/>
    <property type="match status" value="1"/>
</dbReference>
<dbReference type="PANTHER" id="PTHR43011:SF1">
    <property type="entry name" value="IRON-SULFUR CLUSTER ASSEMBLY 2 HOMOLOG, MITOCHONDRIAL"/>
    <property type="match status" value="1"/>
</dbReference>
<dbReference type="Pfam" id="PF01521">
    <property type="entry name" value="Fe-S_biosyn"/>
    <property type="match status" value="1"/>
</dbReference>
<dbReference type="SUPFAM" id="SSF89360">
    <property type="entry name" value="HesB-like domain"/>
    <property type="match status" value="1"/>
</dbReference>
<dbReference type="PROSITE" id="PS01152">
    <property type="entry name" value="HESB"/>
    <property type="match status" value="1"/>
</dbReference>
<sequence>MTDMTIPLTFTDAAAKKVKNLIIEEENQDLKLRVYITGGGCSGFQYGFTFDEKVNDGDLTIENDGVKLVIDPMSLQYLIGGTVDYTEGLEGSRFVVHNPNATTTCGCGSSFSI</sequence>
<proteinExistence type="inferred from homology"/>
<reference key="1">
    <citation type="journal article" date="2004" name="Nat. Biotechnol.">
        <title>The genome sequence of the capnophilic rumen bacterium Mannheimia succiniciproducens.</title>
        <authorList>
            <person name="Hong S.H."/>
            <person name="Kim J.S."/>
            <person name="Lee S.Y."/>
            <person name="In Y.H."/>
            <person name="Choi S.S."/>
            <person name="Rih J.-K."/>
            <person name="Kim C.H."/>
            <person name="Jeong H."/>
            <person name="Hur C.G."/>
            <person name="Kim J.J."/>
        </authorList>
    </citation>
    <scope>NUCLEOTIDE SEQUENCE [LARGE SCALE GENOMIC DNA]</scope>
    <source>
        <strain>KCTC 0769BP / MBEL55E</strain>
    </source>
</reference>